<protein>
    <recommendedName>
        <fullName>Internalin B</fullName>
        <shortName>InlB</shortName>
    </recommendedName>
    <alternativeName>
        <fullName>Invasion protein InlB</fullName>
    </alternativeName>
</protein>
<name>INLB_LISMO</name>
<feature type="signal peptide" evidence="2">
    <location>
        <begin position="1"/>
        <end position="30"/>
    </location>
</feature>
<feature type="chain" id="PRO_0000021514" description="Internalin B">
    <location>
        <begin position="31"/>
        <end position="630"/>
    </location>
</feature>
<feature type="domain" description="LRRNT">
    <location>
        <begin position="31"/>
        <end position="76"/>
    </location>
</feature>
<feature type="repeat" description="LRR 1" evidence="2">
    <location>
        <begin position="75"/>
        <end position="97"/>
    </location>
</feature>
<feature type="repeat" description="LRR 2" evidence="2">
    <location>
        <begin position="98"/>
        <end position="121"/>
    </location>
</feature>
<feature type="repeat" description="LRR 3" evidence="2">
    <location>
        <begin position="123"/>
        <end position="141"/>
    </location>
</feature>
<feature type="repeat" description="LRR 4" evidence="2">
    <location>
        <begin position="142"/>
        <end position="163"/>
    </location>
</feature>
<feature type="repeat" description="LRR 5" evidence="2">
    <location>
        <begin position="164"/>
        <end position="187"/>
    </location>
</feature>
<feature type="repeat" description="LRR 6" evidence="2">
    <location>
        <begin position="189"/>
        <end position="207"/>
    </location>
</feature>
<feature type="repeat" description="LRR 7" evidence="2">
    <location>
        <begin position="208"/>
        <end position="231"/>
    </location>
</feature>
<feature type="domain" description="LRRCT">
    <location>
        <begin position="241"/>
        <end position="330"/>
    </location>
</feature>
<feature type="domain" description="GW 1" evidence="3">
    <location>
        <begin position="393"/>
        <end position="467"/>
    </location>
</feature>
<feature type="domain" description="GW 2" evidence="3">
    <location>
        <begin position="472"/>
        <end position="550"/>
    </location>
</feature>
<feature type="domain" description="GW 3" evidence="3">
    <location>
        <begin position="553"/>
        <end position="630"/>
    </location>
</feature>
<feature type="region of interest" description="Ig-like region" evidence="12 13 14">
    <location>
        <begin position="241"/>
        <end position="319"/>
    </location>
</feature>
<feature type="region of interest" description="B repeat region" evidence="15">
    <location>
        <begin position="320"/>
        <end position="392"/>
    </location>
</feature>
<feature type="region of interest" description="GW repeat region, necessary and sufficient for cell surface attachment, interacts with host C1QBP and with heparin" evidence="1">
    <location>
        <begin position="399"/>
        <end position="630"/>
    </location>
</feature>
<feature type="mutagenesis site" description="Adds LRRb repeat, N-terminal fragment (36-321) binds MET, wild-type phosphorylation of downstream effectors MAPK1/MAPK3, full-length protein induces wild-type cell scattering." evidence="9">
    <original>Q</original>
    <variation>EYLPNLDQLILNNNSIASIVG</variation>
    <location>
        <position position="95"/>
    </location>
</feature>
<feature type="mutagenesis site" description="Adds LRRa repeat, N-terminal fragment (36-321) binds MET, slightly reduced phosphorylation of downstream effectors MAPK1/MAPK3." evidence="9">
    <original>Q</original>
    <variation>YLPNLTSLNLSNNQITDISPI</variation>
    <location>
        <position position="95"/>
    </location>
</feature>
<feature type="mutagenesis site" description="A 4 Arg mutant, in vitro wild-type binding of host MET, severely reduced activation of MET and downstream targets." evidence="7">
    <original>SDIVPLAGLTKLQNLYLSKNHISDLRALA</original>
    <variation>RRIVPLARLTKLQNLYLSKNHISDLRALR</variation>
    <location>
        <begin position="199"/>
        <end position="227"/>
    </location>
</feature>
<feature type="mutagenesis site" description="A 3 Arg mutant, in vitro about 100-fold reduced activation of host MET and downstream targets, reduced host cell scattering upon incubation with mutant protein." evidence="7">
    <original>DIVPLAGLTKLQNLYLSKNHISDLRALA</original>
    <variation>RIVPLARLTKLQNLYLSKNHISDLRALR</variation>
    <location>
        <begin position="200"/>
        <end position="227"/>
    </location>
</feature>
<feature type="mutagenesis site" description="A 2 Cys mutant, forms 2 intermolecular disulfide bonds, about 100-fold more potent activator of MET, increased downstream effector phosphorylation." evidence="7">
    <original>GLTKLQNLYLSKNHISDLRALA</original>
    <variation>CLTKLQNLYLSKNHISDLRALC</variation>
    <location>
        <begin position="206"/>
        <end position="227"/>
    </location>
</feature>
<feature type="mutagenesis site" description="The B-repeat fragment (residues 31-392) no longer scatters host cell colonies, full-length protein reduces MET phosphorylation and downstream activity about 10-fold." evidence="10">
    <original>T</original>
    <variation>E</variation>
    <location>
        <position position="332"/>
    </location>
</feature>
<feature type="mutagenesis site" description="The B-repeat fragment (residues 31-392) no longer scatters host cell colonies." evidence="10">
    <original>IKT</original>
    <variation>KKL</variation>
    <location>
        <begin position="334"/>
        <end position="336"/>
    </location>
</feature>
<feature type="mutagenesis site" description="No effect on cell scattering by the B-repeat fragment (residues 31-392)." evidence="10">
    <original>T</original>
    <variation>Y</variation>
    <location>
        <position position="336"/>
    </location>
</feature>
<feature type="helix" evidence="30">
    <location>
        <begin position="44"/>
        <end position="47"/>
    </location>
</feature>
<feature type="helix" evidence="30">
    <location>
        <begin position="51"/>
        <end position="61"/>
    </location>
</feature>
<feature type="strand" evidence="30">
    <location>
        <begin position="68"/>
        <end position="70"/>
    </location>
</feature>
<feature type="helix" evidence="30">
    <location>
        <begin position="72"/>
        <end position="76"/>
    </location>
</feature>
<feature type="strand" evidence="30">
    <location>
        <begin position="80"/>
        <end position="82"/>
    </location>
</feature>
<feature type="helix" evidence="30">
    <location>
        <begin position="94"/>
        <end position="96"/>
    </location>
</feature>
<feature type="strand" evidence="29">
    <location>
        <begin position="102"/>
        <end position="104"/>
    </location>
</feature>
<feature type="helix" evidence="29">
    <location>
        <begin position="114"/>
        <end position="116"/>
    </location>
</feature>
<feature type="strand" evidence="29">
    <location>
        <begin position="124"/>
        <end position="126"/>
    </location>
</feature>
<feature type="helix" evidence="29">
    <location>
        <begin position="136"/>
        <end position="138"/>
    </location>
</feature>
<feature type="strand" evidence="29">
    <location>
        <begin position="146"/>
        <end position="148"/>
    </location>
</feature>
<feature type="helix" evidence="29">
    <location>
        <begin position="158"/>
        <end position="162"/>
    </location>
</feature>
<feature type="strand" evidence="29">
    <location>
        <begin position="168"/>
        <end position="170"/>
    </location>
</feature>
<feature type="helix" evidence="29">
    <location>
        <begin position="180"/>
        <end position="184"/>
    </location>
</feature>
<feature type="strand" evidence="29">
    <location>
        <begin position="189"/>
        <end position="192"/>
    </location>
</feature>
<feature type="helix" evidence="29">
    <location>
        <begin position="202"/>
        <end position="204"/>
    </location>
</feature>
<feature type="strand" evidence="29">
    <location>
        <begin position="212"/>
        <end position="214"/>
    </location>
</feature>
<feature type="helix" evidence="29">
    <location>
        <begin position="224"/>
        <end position="226"/>
    </location>
</feature>
<feature type="strand" evidence="29">
    <location>
        <begin position="233"/>
        <end position="243"/>
    </location>
</feature>
<feature type="strand" evidence="29">
    <location>
        <begin position="251"/>
        <end position="256"/>
    </location>
</feature>
<feature type="strand" evidence="29">
    <location>
        <begin position="270"/>
        <end position="273"/>
    </location>
</feature>
<feature type="strand" evidence="29">
    <location>
        <begin position="277"/>
        <end position="279"/>
    </location>
</feature>
<feature type="strand" evidence="29">
    <location>
        <begin position="282"/>
        <end position="286"/>
    </location>
</feature>
<feature type="strand" evidence="28">
    <location>
        <begin position="288"/>
        <end position="290"/>
    </location>
</feature>
<feature type="strand" evidence="29">
    <location>
        <begin position="292"/>
        <end position="304"/>
    </location>
</feature>
<feature type="strand" evidence="29">
    <location>
        <begin position="307"/>
        <end position="320"/>
    </location>
</feature>
<feature type="strand" evidence="27">
    <location>
        <begin position="322"/>
        <end position="329"/>
    </location>
</feature>
<feature type="strand" evidence="27">
    <location>
        <begin position="332"/>
        <end position="339"/>
    </location>
</feature>
<feature type="strand" evidence="27">
    <location>
        <begin position="355"/>
        <end position="366"/>
    </location>
</feature>
<feature type="turn" evidence="27">
    <location>
        <begin position="372"/>
        <end position="374"/>
    </location>
</feature>
<feature type="strand" evidence="27">
    <location>
        <begin position="382"/>
        <end position="390"/>
    </location>
</feature>
<dbReference type="EMBL" id="AL591975">
    <property type="protein sequence ID" value="CAC98513.1"/>
    <property type="molecule type" value="Genomic_DNA"/>
</dbReference>
<dbReference type="PIR" id="AC1129">
    <property type="entry name" value="AC1129"/>
</dbReference>
<dbReference type="RefSeq" id="NP_463963.1">
    <property type="nucleotide sequence ID" value="NC_003210.1"/>
</dbReference>
<dbReference type="RefSeq" id="WP_010989463.1">
    <property type="nucleotide sequence ID" value="NZ_CP149495.1"/>
</dbReference>
<dbReference type="PDB" id="1H6T">
    <property type="method" value="X-ray"/>
    <property type="resolution" value="1.60 A"/>
    <property type="chains" value="A=36-321"/>
</dbReference>
<dbReference type="PDB" id="2UZX">
    <property type="method" value="X-ray"/>
    <property type="resolution" value="2.80 A"/>
    <property type="chains" value="A/C=36-321"/>
</dbReference>
<dbReference type="PDB" id="2UZY">
    <property type="method" value="X-ray"/>
    <property type="resolution" value="4.00 A"/>
    <property type="chains" value="A/C=36-321"/>
</dbReference>
<dbReference type="PDB" id="2WQU">
    <property type="method" value="X-ray"/>
    <property type="resolution" value="2.60 A"/>
    <property type="chains" value="A/B/C/D/E/F=36-321"/>
</dbReference>
<dbReference type="PDB" id="2WQV">
    <property type="method" value="X-ray"/>
    <property type="resolution" value="2.80 A"/>
    <property type="chains" value="A/B=36-321"/>
</dbReference>
<dbReference type="PDB" id="2WQW">
    <property type="method" value="X-ray"/>
    <property type="resolution" value="2.24 A"/>
    <property type="chains" value="A/B=36-321"/>
</dbReference>
<dbReference type="PDB" id="2WQX">
    <property type="method" value="X-ray"/>
    <property type="resolution" value="2.03 A"/>
    <property type="chains" value="A/B=36-321"/>
</dbReference>
<dbReference type="PDB" id="2Y5P">
    <property type="method" value="X-ray"/>
    <property type="resolution" value="1.30 A"/>
    <property type="chains" value="A/B/C/D=322-392"/>
</dbReference>
<dbReference type="PDB" id="2Y5Q">
    <property type="method" value="X-ray"/>
    <property type="resolution" value="3.20 A"/>
    <property type="chains" value="A=36-392"/>
</dbReference>
<dbReference type="PDB" id="4AW4">
    <property type="method" value="X-ray"/>
    <property type="resolution" value="1.93 A"/>
    <property type="chains" value="A/B/C=36-321"/>
</dbReference>
<dbReference type="PDB" id="4CIL">
    <property type="method" value="X-ray"/>
    <property type="resolution" value="1.50 A"/>
    <property type="chains" value="A=93-321"/>
</dbReference>
<dbReference type="PDB" id="6DBF">
    <property type="method" value="X-ray"/>
    <property type="resolution" value="1.55 A"/>
    <property type="chains" value="A=36-248"/>
</dbReference>
<dbReference type="PDB" id="6DBG">
    <property type="method" value="X-ray"/>
    <property type="resolution" value="1.51 A"/>
    <property type="chains" value="A/B=36-321"/>
</dbReference>
<dbReference type="PDB" id="7NMS">
    <property type="method" value="X-ray"/>
    <property type="resolution" value="1.80 A"/>
    <property type="chains" value="A=36-392"/>
</dbReference>
<dbReference type="PDB" id="7PV8">
    <property type="method" value="X-ray"/>
    <property type="resolution" value="2.05 A"/>
    <property type="chains" value="A=36-392"/>
</dbReference>
<dbReference type="PDB" id="7PV9">
    <property type="method" value="X-ray"/>
    <property type="resolution" value="3.30 A"/>
    <property type="chains" value="A/B/C=36-392"/>
</dbReference>
<dbReference type="PDB" id="8QP7">
    <property type="method" value="X-ray"/>
    <property type="resolution" value="2.05 A"/>
    <property type="chains" value="A=93-321"/>
</dbReference>
<dbReference type="PDBsum" id="1H6T"/>
<dbReference type="PDBsum" id="2UZX"/>
<dbReference type="PDBsum" id="2UZY"/>
<dbReference type="PDBsum" id="2WQU"/>
<dbReference type="PDBsum" id="2WQV"/>
<dbReference type="PDBsum" id="2WQW"/>
<dbReference type="PDBsum" id="2WQX"/>
<dbReference type="PDBsum" id="2Y5P"/>
<dbReference type="PDBsum" id="2Y5Q"/>
<dbReference type="PDBsum" id="4AW4"/>
<dbReference type="PDBsum" id="4CIL"/>
<dbReference type="PDBsum" id="6DBF"/>
<dbReference type="PDBsum" id="6DBG"/>
<dbReference type="PDBsum" id="7NMS"/>
<dbReference type="PDBsum" id="7PV8"/>
<dbReference type="PDBsum" id="7PV9"/>
<dbReference type="PDBsum" id="8QP7"/>
<dbReference type="SMR" id="P0DQD2"/>
<dbReference type="IntAct" id="P0DQD2">
    <property type="interactions" value="2"/>
</dbReference>
<dbReference type="STRING" id="169963.gene:17593085"/>
<dbReference type="PaxDb" id="169963-lmo0434"/>
<dbReference type="ABCD" id="P0DQD2">
    <property type="antibodies" value="6 sequenced antibodies"/>
</dbReference>
<dbReference type="EnsemblBacteria" id="CAC98513">
    <property type="protein sequence ID" value="CAC98513"/>
    <property type="gene ID" value="CAC98513"/>
</dbReference>
<dbReference type="GeneID" id="986892"/>
<dbReference type="KEGG" id="lmo:lmo0434"/>
<dbReference type="OrthoDB" id="9816557at2"/>
<dbReference type="Reactome" id="R-HSA-8875360">
    <property type="pathway name" value="InlB-mediated entry of Listeria monocytogenes into host cell"/>
</dbReference>
<dbReference type="EvolutionaryTrace" id="P0DQD2"/>
<dbReference type="PHI-base" id="PHI:9818"/>
<dbReference type="Proteomes" id="UP000000817">
    <property type="component" value="Chromosome"/>
</dbReference>
<dbReference type="GO" id="GO:0005737">
    <property type="term" value="C:cytoplasm"/>
    <property type="evidence" value="ECO:0007669"/>
    <property type="project" value="UniProtKB-SubCell"/>
</dbReference>
<dbReference type="GO" id="GO:0005576">
    <property type="term" value="C:extracellular region"/>
    <property type="evidence" value="ECO:0007669"/>
    <property type="project" value="UniProtKB-SubCell"/>
</dbReference>
<dbReference type="GO" id="GO:0009274">
    <property type="term" value="C:peptidoglycan-based cell wall"/>
    <property type="evidence" value="ECO:0000304"/>
    <property type="project" value="Reactome"/>
</dbReference>
<dbReference type="GO" id="GO:0005886">
    <property type="term" value="C:plasma membrane"/>
    <property type="evidence" value="ECO:0007669"/>
    <property type="project" value="UniProtKB-SubCell"/>
</dbReference>
<dbReference type="GO" id="GO:0008201">
    <property type="term" value="F:heparin binding"/>
    <property type="evidence" value="ECO:0007669"/>
    <property type="project" value="UniProtKB-KW"/>
</dbReference>
<dbReference type="GO" id="GO:0008289">
    <property type="term" value="F:lipid binding"/>
    <property type="evidence" value="ECO:0007669"/>
    <property type="project" value="UniProtKB-KW"/>
</dbReference>
<dbReference type="FunFam" id="3.80.10.10:FF:001164">
    <property type="entry name" value="GH01279p"/>
    <property type="match status" value="1"/>
</dbReference>
<dbReference type="FunFam" id="2.30.30.170:FF:000001">
    <property type="entry name" value="Internalin B"/>
    <property type="match status" value="1"/>
</dbReference>
<dbReference type="Gene3D" id="2.30.30.170">
    <property type="match status" value="3"/>
</dbReference>
<dbReference type="Gene3D" id="2.60.40.1220">
    <property type="match status" value="1"/>
</dbReference>
<dbReference type="Gene3D" id="2.60.40.4270">
    <property type="entry name" value="Listeria-Bacteroides repeat domain"/>
    <property type="match status" value="1"/>
</dbReference>
<dbReference type="Gene3D" id="3.80.10.10">
    <property type="entry name" value="Ribonuclease Inhibitor"/>
    <property type="match status" value="1"/>
</dbReference>
<dbReference type="InterPro" id="IPR014755">
    <property type="entry name" value="Cu-Rt/internalin_Ig-like"/>
</dbReference>
<dbReference type="InterPro" id="IPR025987">
    <property type="entry name" value="GW_dom"/>
</dbReference>
<dbReference type="InterPro" id="IPR038200">
    <property type="entry name" value="GW_dom_sf"/>
</dbReference>
<dbReference type="InterPro" id="IPR014756">
    <property type="entry name" value="Ig_E-set"/>
</dbReference>
<dbReference type="InterPro" id="IPR012569">
    <property type="entry name" value="Inl_IR"/>
</dbReference>
<dbReference type="InterPro" id="IPR013378">
    <property type="entry name" value="InlB-like_B-rpt"/>
</dbReference>
<dbReference type="InterPro" id="IPR024634">
    <property type="entry name" value="Internalin_N"/>
</dbReference>
<dbReference type="InterPro" id="IPR001611">
    <property type="entry name" value="Leu-rich_rpt"/>
</dbReference>
<dbReference type="InterPro" id="IPR025875">
    <property type="entry name" value="Leu-rich_rpt_4"/>
</dbReference>
<dbReference type="InterPro" id="IPR003591">
    <property type="entry name" value="Leu-rich_rpt_typical-subtyp"/>
</dbReference>
<dbReference type="InterPro" id="IPR042229">
    <property type="entry name" value="Listeria/Bacterioides_rpt_sf"/>
</dbReference>
<dbReference type="InterPro" id="IPR032675">
    <property type="entry name" value="LRR_dom_sf"/>
</dbReference>
<dbReference type="InterPro" id="IPR050836">
    <property type="entry name" value="SDS22/Internalin_LRR"/>
</dbReference>
<dbReference type="NCBIfam" id="NF033202">
    <property type="entry name" value="GW_glycos_SH3"/>
    <property type="match status" value="3"/>
</dbReference>
<dbReference type="NCBIfam" id="TIGR02543">
    <property type="entry name" value="List_Bact_rpt"/>
    <property type="match status" value="1"/>
</dbReference>
<dbReference type="PANTHER" id="PTHR46652">
    <property type="entry name" value="LEUCINE-RICH REPEAT AND IQ DOMAIN-CONTAINING PROTEIN 1-RELATED"/>
    <property type="match status" value="1"/>
</dbReference>
<dbReference type="PANTHER" id="PTHR46652:SF3">
    <property type="entry name" value="LEUCINE-RICH REPEAT-CONTAINING PROTEIN 9"/>
    <property type="match status" value="1"/>
</dbReference>
<dbReference type="Pfam" id="PF09479">
    <property type="entry name" value="Flg_new"/>
    <property type="match status" value="1"/>
</dbReference>
<dbReference type="Pfam" id="PF13457">
    <property type="entry name" value="GW"/>
    <property type="match status" value="3"/>
</dbReference>
<dbReference type="Pfam" id="PF12354">
    <property type="entry name" value="Internalin_N"/>
    <property type="match status" value="1"/>
</dbReference>
<dbReference type="Pfam" id="PF12799">
    <property type="entry name" value="LRR_4"/>
    <property type="match status" value="2"/>
</dbReference>
<dbReference type="Pfam" id="PF08191">
    <property type="entry name" value="LRR_adjacent"/>
    <property type="match status" value="1"/>
</dbReference>
<dbReference type="SMART" id="SM00365">
    <property type="entry name" value="LRR_SD22"/>
    <property type="match status" value="5"/>
</dbReference>
<dbReference type="SMART" id="SM00369">
    <property type="entry name" value="LRR_TYP"/>
    <property type="match status" value="5"/>
</dbReference>
<dbReference type="SUPFAM" id="SSF81296">
    <property type="entry name" value="E set domains"/>
    <property type="match status" value="1"/>
</dbReference>
<dbReference type="SUPFAM" id="SSF52058">
    <property type="entry name" value="L domain-like"/>
    <property type="match status" value="1"/>
</dbReference>
<dbReference type="SUPFAM" id="SSF82057">
    <property type="entry name" value="Prokaryotic SH3-related domain"/>
    <property type="match status" value="3"/>
</dbReference>
<dbReference type="PROSITE" id="PS51780">
    <property type="entry name" value="GW"/>
    <property type="match status" value="3"/>
</dbReference>
<dbReference type="PROSITE" id="PS51450">
    <property type="entry name" value="LRR"/>
    <property type="match status" value="6"/>
</dbReference>
<keyword id="KW-0002">3D-structure</keyword>
<keyword id="KW-1003">Cell membrane</keyword>
<keyword id="KW-0963">Cytoplasm</keyword>
<keyword id="KW-0358">Heparin-binding</keyword>
<keyword id="KW-0433">Leucine-rich repeat</keyword>
<keyword id="KW-0446">Lipid-binding</keyword>
<keyword id="KW-0472">Membrane</keyword>
<keyword id="KW-1185">Reference proteome</keyword>
<keyword id="KW-0677">Repeat</keyword>
<keyword id="KW-0964">Secreted</keyword>
<keyword id="KW-0732">Signal</keyword>
<keyword id="KW-0843">Virulence</keyword>
<evidence type="ECO:0000250" key="1">
    <source>
        <dbReference type="UniProtKB" id="P0DQD3"/>
    </source>
</evidence>
<evidence type="ECO:0000255" key="2"/>
<evidence type="ECO:0000255" key="3">
    <source>
        <dbReference type="PROSITE-ProRule" id="PRU01116"/>
    </source>
</evidence>
<evidence type="ECO:0000269" key="4">
    <source>
    </source>
</evidence>
<evidence type="ECO:0000269" key="5">
    <source>
    </source>
</evidence>
<evidence type="ECO:0000269" key="6">
    <source>
    </source>
</evidence>
<evidence type="ECO:0000269" key="7">
    <source>
    </source>
</evidence>
<evidence type="ECO:0000269" key="8">
    <source>
    </source>
</evidence>
<evidence type="ECO:0000269" key="9">
    <source>
    </source>
</evidence>
<evidence type="ECO:0000269" key="10">
    <source>
    </source>
</evidence>
<evidence type="ECO:0000305" key="11"/>
<evidence type="ECO:0000305" key="12">
    <source>
    </source>
</evidence>
<evidence type="ECO:0000305" key="13">
    <source>
    </source>
</evidence>
<evidence type="ECO:0000305" key="14">
    <source>
    </source>
</evidence>
<evidence type="ECO:0000305" key="15">
    <source>
    </source>
</evidence>
<evidence type="ECO:0000305" key="16">
    <source>
    </source>
</evidence>
<evidence type="ECO:0007744" key="17">
    <source>
        <dbReference type="PDB" id="1H6T"/>
    </source>
</evidence>
<evidence type="ECO:0007744" key="18">
    <source>
        <dbReference type="PDB" id="2UZX"/>
    </source>
</evidence>
<evidence type="ECO:0007744" key="19">
    <source>
        <dbReference type="PDB" id="2UZY"/>
    </source>
</evidence>
<evidence type="ECO:0007744" key="20">
    <source>
        <dbReference type="PDB" id="2WQU"/>
    </source>
</evidence>
<evidence type="ECO:0007744" key="21">
    <source>
        <dbReference type="PDB" id="2WQV"/>
    </source>
</evidence>
<evidence type="ECO:0007744" key="22">
    <source>
        <dbReference type="PDB" id="2WQW"/>
    </source>
</evidence>
<evidence type="ECO:0007744" key="23">
    <source>
        <dbReference type="PDB" id="2WQX"/>
    </source>
</evidence>
<evidence type="ECO:0007744" key="24">
    <source>
        <dbReference type="PDB" id="2Y5P"/>
    </source>
</evidence>
<evidence type="ECO:0007744" key="25">
    <source>
        <dbReference type="PDB" id="2Y5Q"/>
    </source>
</evidence>
<evidence type="ECO:0007744" key="26">
    <source>
        <dbReference type="PDB" id="4AW4"/>
    </source>
</evidence>
<evidence type="ECO:0007829" key="27">
    <source>
        <dbReference type="PDB" id="2Y5P"/>
    </source>
</evidence>
<evidence type="ECO:0007829" key="28">
    <source>
        <dbReference type="PDB" id="2Y5Q"/>
    </source>
</evidence>
<evidence type="ECO:0007829" key="29">
    <source>
        <dbReference type="PDB" id="4CIL"/>
    </source>
</evidence>
<evidence type="ECO:0007829" key="30">
    <source>
        <dbReference type="PDB" id="6DBG"/>
    </source>
</evidence>
<sequence>MKEKHNPRRKYCLISGLAIIFSLWIIIGNGAKVQAETITVPTPIKQIFSDDAFAETIKDNLKKKSVTDAVTQNELNSIDQIIANNSDIKSVQGIQYLPNVTKLFLNGNKLTDIKPLANLKNLGWLFLDENKVKDLSSLKDLKKLKSLSLEHNGISDINGLVHLPQLESLYLGNNKITDITVLSRLTKLDTLSLEDNQISDIVPLAGLTKLQNLYLSKNHISDLRALAGLKNLDVLELFSQECLNKPINHQSNLVVPNTVKNTDGSLVTPEIISDDGDYEKPNVKWHLPEFTNEVSFIFYQPVTIGKAKARFHGRVTQPLKEVYTVSYDVDGTVIKTKVEAGTRITAPKPPTKQGYVFKGWYTEKNGGHEWNFNTDYMSGNDFTLYAVFKAETTEKAVNLTRYVKYIRGNAGIYKLPREDNSLKQGTLASHRCKALTVDREARNGGKLWYRLKNIGWTKAENLSLDRYDKMEYDKGVTAYARVRNASGNSVWTKPYNTAGAKHVNKLSVYQGKNMRILREAKTPITTWYQFSIGGKVIGWVDTRALNTFYKQSMEKPTRLTRYVSANKAGESYYKVPVADNPVKRGTLAKYKNQKLIVDCQATIEGQLWYRIRTSSTFIGWTKAANLRAQK</sequence>
<reference key="1">
    <citation type="journal article" date="2001" name="Science">
        <title>Comparative genomics of Listeria species.</title>
        <authorList>
            <person name="Glaser P."/>
            <person name="Frangeul L."/>
            <person name="Buchrieser C."/>
            <person name="Rusniok C."/>
            <person name="Amend A."/>
            <person name="Baquero F."/>
            <person name="Berche P."/>
            <person name="Bloecker H."/>
            <person name="Brandt P."/>
            <person name="Chakraborty T."/>
            <person name="Charbit A."/>
            <person name="Chetouani F."/>
            <person name="Couve E."/>
            <person name="de Daruvar A."/>
            <person name="Dehoux P."/>
            <person name="Domann E."/>
            <person name="Dominguez-Bernal G."/>
            <person name="Duchaud E."/>
            <person name="Durant L."/>
            <person name="Dussurget O."/>
            <person name="Entian K.-D."/>
            <person name="Fsihi H."/>
            <person name="Garcia-del Portillo F."/>
            <person name="Garrido P."/>
            <person name="Gautier L."/>
            <person name="Goebel W."/>
            <person name="Gomez-Lopez N."/>
            <person name="Hain T."/>
            <person name="Hauf J."/>
            <person name="Jackson D."/>
            <person name="Jones L.-M."/>
            <person name="Kaerst U."/>
            <person name="Kreft J."/>
            <person name="Kuhn M."/>
            <person name="Kunst F."/>
            <person name="Kurapkat G."/>
            <person name="Madueno E."/>
            <person name="Maitournam A."/>
            <person name="Mata Vicente J."/>
            <person name="Ng E."/>
            <person name="Nedjari H."/>
            <person name="Nordsiek G."/>
            <person name="Novella S."/>
            <person name="de Pablos B."/>
            <person name="Perez-Diaz J.-C."/>
            <person name="Purcell R."/>
            <person name="Remmel B."/>
            <person name="Rose M."/>
            <person name="Schlueter T."/>
            <person name="Simoes N."/>
            <person name="Tierrez A."/>
            <person name="Vazquez-Boland J.-A."/>
            <person name="Voss H."/>
            <person name="Wehland J."/>
            <person name="Cossart P."/>
        </authorList>
    </citation>
    <scope>NUCLEOTIDE SEQUENCE [LARGE SCALE GENOMIC DNA]</scope>
    <source>
        <strain>ATCC BAA-679 / EGD-e</strain>
    </source>
</reference>
<reference key="2">
    <citation type="journal article" date="2002" name="Mol. Microbiol.">
        <title>Inactivation of the srtA gene in Listeria monocytogenes inhibits anchoring of surface proteins and affects virulence.</title>
        <authorList>
            <person name="Bierne H."/>
            <person name="Mazmanian S.K."/>
            <person name="Trost M."/>
            <person name="Pucciarelli M.G."/>
            <person name="Liu G."/>
            <person name="Dehoux P."/>
            <person name="Jansch L."/>
            <person name="Garcia-del Portillo F."/>
            <person name="Schneewind O."/>
            <person name="Cossart P."/>
        </authorList>
    </citation>
    <scope>SUBCELLULAR LOCATION</scope>
    <scope>DISRUPTION PHENOTYPE</scope>
    <source>
        <strain>ATCC BAA-679 / EGD-e</strain>
    </source>
</reference>
<reference key="3">
    <citation type="journal article" date="2016" name="J. Biol. Chem.">
        <title>MET-activating residues in the B-repeat of the Listeria monocytogenes invasion protein InlB.</title>
        <authorList>
            <person name="Bleymueller W.M."/>
            <person name="Laemmermann N."/>
            <person name="Ebbes M."/>
            <person name="Maynard D."/>
            <person name="Geerds C."/>
            <person name="Niemann H.H."/>
        </authorList>
    </citation>
    <scope>FUNCTION</scope>
    <scope>DOMAIN</scope>
    <scope>MUTAGENESIS OF THR-332; 334-ILE--THR-336 AND THR-336</scope>
</reference>
<reference evidence="17" key="4">
    <citation type="journal article" date="2001" name="J. Mol. Biol.">
        <title>Internalins from the human pathogen Listeria monocytogenes combine three distinct folds into a contiguous internalin domain.</title>
        <authorList>
            <person name="Schubert W.D."/>
            <person name="Goebel G."/>
            <person name="Diepholz M."/>
            <person name="Darji A."/>
            <person name="Kloer D."/>
            <person name="Hain T."/>
            <person name="Chakraborty T."/>
            <person name="Wehland J."/>
            <person name="Domann E."/>
            <person name="Heinz D.W."/>
        </authorList>
    </citation>
    <scope>X-RAY CRYSTALLOGRAPHY (1.80 ANGSTROMS) OF 36-321</scope>
    <scope>DOMAIN</scope>
    <source>
        <strain>ATCC BAA-679 / EGD-e</strain>
    </source>
</reference>
<reference evidence="18 19" key="5">
    <citation type="journal article" date="2007" name="Cell">
        <title>Structure of the human receptor tyrosine kinase Met in complex with the Listeria invasion protein InlB.</title>
        <authorList>
            <person name="Niemann H.H."/>
            <person name="Jager V."/>
            <person name="Butler P.J."/>
            <person name="van den Heuvel J."/>
            <person name="Schmidt S."/>
            <person name="Ferraris D."/>
            <person name="Gherardi E."/>
            <person name="Heinz D.W."/>
        </authorList>
    </citation>
    <scope>X-RAY CRYSTALLOGRAPHY (2.8 ANGSTROMS) OF 36-321 IN COMPLEX WITH HUMAN MET</scope>
    <scope>INTERACTION WITH HUMAN MET</scope>
    <scope>DOMAIN</scope>
    <source>
        <strain>ATCC BAA-679 / EGD-e</strain>
    </source>
</reference>
<reference evidence="20 21 22 23" key="6">
    <citation type="journal article" date="2010" name="J. Mol. Biol.">
        <title>Ligand-mediated dimerization of the Met receptor tyrosine kinase by the bacterial invasion protein InlB.</title>
        <authorList>
            <person name="Ferraris D.M."/>
            <person name="Gherardi E."/>
            <person name="Di Y."/>
            <person name="Heinz D.W."/>
            <person name="Niemann H.H."/>
        </authorList>
    </citation>
    <scope>X-RAY CRYSTALLOGRAPHY (2.03 ANGSTROMS) OF 36-321</scope>
    <scope>FUNCTION</scope>
    <scope>SUBUNIT</scope>
    <scope>DOMAIN</scope>
    <scope>MUTAGENESIS OF 199-SER--ALA-227; 200-ASP--ALA-227 AND 206-GLY--ALA-227</scope>
    <source>
        <strain>ATCC BAA-679 / EGD-e</strain>
    </source>
</reference>
<reference evidence="24 25" key="7">
    <citation type="journal article" date="2011" name="J. Biol. Chem.">
        <title>Fold and function of the InlB B-repeat.</title>
        <authorList>
            <person name="Ebbes M."/>
            <person name="Bleymuller W.M."/>
            <person name="Cernescu M."/>
            <person name="Nolker R."/>
            <person name="Brutschy B."/>
            <person name="Niemann H.H."/>
        </authorList>
    </citation>
    <scope>X-RAY CRYSTALLOGRAPHY (3.20 ANGSTROMS) OF 36-392</scope>
    <scope>X-RAY CRYSTALLOGRAPHY (1.30 ANGSTROMS) OF 322-392</scope>
    <scope>FUNCTION</scope>
    <scope>DOMAIN</scope>
    <source>
        <strain>ATCC BAA-679 / EGD-e</strain>
    </source>
</reference>
<reference evidence="26" key="8">
    <citation type="journal article" date="2012" name="Protein Sci.">
        <title>Engineered variants of InlB with an additional leucine-rich repeat discriminate between physiologically relevant and packing contacts in crystal structures of the InlB:MET complex.</title>
        <authorList>
            <person name="Niemann H.H."/>
            <person name="Gherardi E."/>
            <person name="Bleymuller W.M."/>
            <person name="Heinz D.W."/>
        </authorList>
    </citation>
    <scope>X-RAY CRYSTALLOGRAPHY (1.93 ANGSTROMS) OF 36-321 WITH EXTRA LRR REPEAT</scope>
    <scope>SUBUNIT</scope>
    <scope>DOMAIN</scope>
    <scope>MUTAGENESIS OF GLN-95</scope>
</reference>
<comment type="function">
    <text evidence="1 7 8 9 10">Mediates the entry of L.monocytogenes into normally non-phagocytic mammalian host cells (PubMed:19900460). Its host receptor is hepatocyte growth factor receptor (HGF receptor, a tyrosine kinase, MET) which is tyrosine-phosphorylated in response to InlB. Downstream targets MAPK1/MAPK3 (Erk1/2) and AKT are phosphorylated in response to InlB, which also causes cell colony scattering (PubMed:19900460, PubMed:21345802, PubMed:22887347, PubMed:27789707). Complement component 1 Q subcomponent-binding protein (gC1q-R, C1QBP) has been suggested to also act an InlB receptor, but this is less certain. Stimulation of Tyr-phosphorylation of MET by InlB is potentiated by the InlB GW domains and glycosaminoglycans such as heparin (By similarity).</text>
</comment>
<comment type="subunit">
    <text evidence="6 7 16">Interacts via its LRR repeats plus the Ig-like region with the extracellular portion (residues 25-741) of its receptor MET; MET can bind HGF, its endogenous ligand, and InlB simultaneously (PubMed:17662939). Probably forms a dimer upon interaction with host MET, which subsequently allows dimerization of the host MET and subsequent host signaling; dimerization probably occurs via the convex surface of InlB (Probable) (PubMed:19900460). Prevention of dimerization does not block interaction with MET but prevents downstream action (PubMed:19900460).</text>
</comment>
<comment type="interaction">
    <interactant intactId="EBI-1379295">
        <id>P0DQD2</id>
    </interactant>
    <interactant intactId="EBI-6375765">
        <id>Q9MZE0</id>
        <label>C1QBP</label>
    </interactant>
    <organismsDiffer>true</organismsDiffer>
    <experiments>3</experiments>
</comment>
<comment type="interaction">
    <interactant intactId="EBI-1379295">
        <id>P0DQD2</id>
    </interactant>
    <interactant intactId="EBI-1039152">
        <id>P08581</id>
        <label>MET</label>
    </interactant>
    <organismsDiffer>true</organismsDiffer>
    <experiments>4</experiments>
</comment>
<comment type="subcellular location">
    <subcellularLocation>
        <location evidence="1">Secreted</location>
    </subcellularLocation>
    <subcellularLocation>
        <location evidence="5">Cytoplasm</location>
    </subcellularLocation>
    <subcellularLocation>
        <location evidence="5">Cell membrane</location>
    </subcellularLocation>
    <text evidence="1">Approximately half the protein is secreted. Cell surface association is mediated by the GW domains and can occur when protein is added externally; externally added protein confers invasion competence. Protein is partially buried in the cell membrane; it binds non-covalently to lipoteichoic acid (LTA) on the bacterial membrane, and can be released from the surface by LTA.</text>
</comment>
<comment type="domain">
    <text evidence="4 6 7 8 10 16">The N-terminus (36-79) resembles a truncated EF hand, the LRR region (80-240) has a curved form, while residues 241-321 form an Ig-like region; the whole region forms a curved tube (PubMed:11575932, PubMed:17662939, PubMed:19900460). The LRR domain alone (31-241) binds mammalian MET and stimulates its Tyr-phosphorylation; the LRR plus Ig-like region (36-321) are required for receptor dimerization; adding the B-repeat allows the protein to scatter host cell colonies, and the GW domains, especially GW2 and GW3, potentiate MET activation (PubMed:17662939, PubMed:21345802). The cap, LRR and Ig-like regions all interact with residues 25-656 of host MET (the Sema, PSI and Ig1 domains) via the interior (concave surface) of the curved tube (PubMed:17662939). Dimerizes via the exterior (convex surface) of the curved tube which probably induces host receptor dimerization; preventing dimerization prevents host downstream signaling (Probable) (PubMed:19900460). The B repeat region crystallizes in a SUMO-like fold. The B repeat region interacts synergistically with N-terminus of InlB, conferring on it the ability to stimulate cell motility; the B repeat does not bind to MET (PubMed:21345802). Deletion of the B-repeat (exact residues are not given) slightly decreased protein activity in host; the authors suggest the B-repeat probably contributes to homodimerization rather than binding another host cell receptor (PubMed:27789707).</text>
</comment>
<comment type="disruption phenotype">
    <text evidence="5">Deletion of inlB alone decreases host cell entry; the reduction varies from 99% to 37% depending on the cell line tested.</text>
</comment>
<comment type="similarity">
    <text evidence="11">Belongs to the internalin family.</text>
</comment>
<organism>
    <name type="scientific">Listeria monocytogenes serovar 1/2a (strain ATCC BAA-679 / EGD-e)</name>
    <dbReference type="NCBI Taxonomy" id="169963"/>
    <lineage>
        <taxon>Bacteria</taxon>
        <taxon>Bacillati</taxon>
        <taxon>Bacillota</taxon>
        <taxon>Bacilli</taxon>
        <taxon>Bacillales</taxon>
        <taxon>Listeriaceae</taxon>
        <taxon>Listeria</taxon>
    </lineage>
</organism>
<proteinExistence type="evidence at protein level"/>
<accession>P0DQD2</accession>
<accession>P25147</accession>
<accession>Q9EXG1</accession>
<gene>
    <name type="primary">inlB</name>
    <name type="ordered locus">lmo0434</name>
</gene>